<evidence type="ECO:0000255" key="1">
    <source>
        <dbReference type="HAMAP-Rule" id="MF_04070"/>
    </source>
</evidence>
<evidence type="ECO:0000256" key="2">
    <source>
        <dbReference type="SAM" id="MobiDB-lite"/>
    </source>
</evidence>
<gene>
    <name evidence="1" type="primary">NP</name>
</gene>
<keyword id="KW-0167">Capsid protein</keyword>
<keyword id="KW-1139">Helical capsid protein</keyword>
<keyword id="KW-1048">Host nucleus</keyword>
<keyword id="KW-0945">Host-virus interaction</keyword>
<keyword id="KW-0687">Ribonucleoprotein</keyword>
<keyword id="KW-0694">RNA-binding</keyword>
<keyword id="KW-0543">Viral nucleoprotein</keyword>
<keyword id="KW-1163">Viral penetration into host nucleus</keyword>
<keyword id="KW-0946">Virion</keyword>
<keyword id="KW-1160">Virus entry into host cell</keyword>
<feature type="chain" id="PRO_0000310916" description="Nucleoprotein">
    <location>
        <begin position="1"/>
        <end position="498"/>
    </location>
</feature>
<feature type="region of interest" description="Disordered" evidence="2">
    <location>
        <begin position="1"/>
        <end position="21"/>
    </location>
</feature>
<feature type="short sequence motif" description="Unconventional nuclear localization signal" evidence="1">
    <location>
        <begin position="1"/>
        <end position="18"/>
    </location>
</feature>
<feature type="short sequence motif" description="Bipartite nuclear localization signal" evidence="1">
    <location>
        <begin position="198"/>
        <end position="216"/>
    </location>
</feature>
<dbReference type="EMBL" id="AF509118">
    <property type="protein sequence ID" value="AAO52961.1"/>
    <property type="molecule type" value="Genomic_DNA"/>
</dbReference>
<dbReference type="SMR" id="Q809S9"/>
<dbReference type="GO" id="GO:0019029">
    <property type="term" value="C:helical viral capsid"/>
    <property type="evidence" value="ECO:0007669"/>
    <property type="project" value="UniProtKB-UniRule"/>
</dbReference>
<dbReference type="GO" id="GO:0043657">
    <property type="term" value="C:host cell"/>
    <property type="evidence" value="ECO:0007669"/>
    <property type="project" value="GOC"/>
</dbReference>
<dbReference type="GO" id="GO:0042025">
    <property type="term" value="C:host cell nucleus"/>
    <property type="evidence" value="ECO:0007669"/>
    <property type="project" value="UniProtKB-SubCell"/>
</dbReference>
<dbReference type="GO" id="GO:1990904">
    <property type="term" value="C:ribonucleoprotein complex"/>
    <property type="evidence" value="ECO:0007669"/>
    <property type="project" value="UniProtKB-KW"/>
</dbReference>
<dbReference type="GO" id="GO:0019013">
    <property type="term" value="C:viral nucleocapsid"/>
    <property type="evidence" value="ECO:0007669"/>
    <property type="project" value="UniProtKB-UniRule"/>
</dbReference>
<dbReference type="GO" id="GO:0003723">
    <property type="term" value="F:RNA binding"/>
    <property type="evidence" value="ECO:0007669"/>
    <property type="project" value="UniProtKB-UniRule"/>
</dbReference>
<dbReference type="GO" id="GO:0005198">
    <property type="term" value="F:structural molecule activity"/>
    <property type="evidence" value="ECO:0007669"/>
    <property type="project" value="UniProtKB-UniRule"/>
</dbReference>
<dbReference type="GO" id="GO:0046718">
    <property type="term" value="P:symbiont entry into host cell"/>
    <property type="evidence" value="ECO:0007669"/>
    <property type="project" value="UniProtKB-KW"/>
</dbReference>
<dbReference type="GO" id="GO:0075732">
    <property type="term" value="P:viral penetration into host nucleus"/>
    <property type="evidence" value="ECO:0007669"/>
    <property type="project" value="UniProtKB-UniRule"/>
</dbReference>
<dbReference type="HAMAP" id="MF_04070">
    <property type="entry name" value="INFV_NCAP"/>
    <property type="match status" value="1"/>
</dbReference>
<dbReference type="InterPro" id="IPR002141">
    <property type="entry name" value="Flu_NP"/>
</dbReference>
<dbReference type="Pfam" id="PF00506">
    <property type="entry name" value="Flu_NP"/>
    <property type="match status" value="1"/>
</dbReference>
<dbReference type="SUPFAM" id="SSF161003">
    <property type="entry name" value="flu NP-like"/>
    <property type="match status" value="1"/>
</dbReference>
<organism>
    <name type="scientific">Influenza A virus (strain A/Chicken/Hong Kong/YU562/2001 H5N1 genotype B)</name>
    <dbReference type="NCBI Taxonomy" id="196426"/>
    <lineage>
        <taxon>Viruses</taxon>
        <taxon>Riboviria</taxon>
        <taxon>Orthornavirae</taxon>
        <taxon>Negarnaviricota</taxon>
        <taxon>Polyploviricotina</taxon>
        <taxon>Insthoviricetes</taxon>
        <taxon>Articulavirales</taxon>
        <taxon>Orthomyxoviridae</taxon>
        <taxon>Alphainfluenzavirus</taxon>
        <taxon>Alphainfluenzavirus influenzae</taxon>
        <taxon>Influenza A virus</taxon>
    </lineage>
</organism>
<name>NCAP_I01A1</name>
<protein>
    <recommendedName>
        <fullName evidence="1">Nucleoprotein</fullName>
    </recommendedName>
    <alternativeName>
        <fullName evidence="1">Nucleocapsid protein</fullName>
        <shortName evidence="1">Protein N</shortName>
    </alternativeName>
</protein>
<sequence>MASQGTKRSYEQMETGGERQNATEIRASVGRMVGGIGRFYIQMCTELKLSDYEGRLIQNSITIERMVLSAFDERRNKYLEEHPNAGKDPKKTGGPIYRRRDGKWVRELILYDKEEIRRIWRQANNGEDATAGLTHLMIWHSNLNDATYQRTRALVRTGMDPRMCSLMQGSTLPRRSGAAGAAVKGVGTMVMELIRMIKRGINDRNFWRGENGRRTRIAYERMCNILKGKFQTAAQRAMMDQVRESRNPGNAEIEDLIFLARSALILRGSVAHKSCLPACVYGLAVASGYDFEREGYSLVGIDPFRLLQNSQVFSLIRPNENPAHKSQLVWMACHSAAFEDLRVSSFIRGTRIVPRGQLSTRGVQIASNENMDTMDSNTLELRSRYWAIRTRSGGNTNQQRASAGQISVQPTFSVQRNLPFERATIMAAFTGNTEGRTSDMRTEIIRMMESARPEDVSFQGRGVFELSDEKATNPIVPSFDMSNEGSYFFGDNAEEFEN</sequence>
<reference key="1">
    <citation type="journal article" date="2002" name="Proc. Natl. Acad. Sci. U.S.A.">
        <title>Emergence of multiple genotypes of H5N1 avian influenza viruses in Hong Kong SAR.</title>
        <authorList>
            <person name="Guan Y."/>
            <person name="Peiris J.S.M."/>
            <person name="Lipatov A.S."/>
            <person name="Ellis T.M."/>
            <person name="Dyrting K.C."/>
            <person name="Krauss S."/>
            <person name="Zhang L.J."/>
            <person name="Webster R.G."/>
            <person name="Shortridge K.F."/>
        </authorList>
    </citation>
    <scope>NUCLEOTIDE SEQUENCE [GENOMIC RNA]</scope>
</reference>
<accession>Q809S9</accession>
<organismHost>
    <name type="scientific">Aves</name>
    <dbReference type="NCBI Taxonomy" id="8782"/>
</organismHost>
<organismHost>
    <name type="scientific">Felis catus</name>
    <name type="common">Cat</name>
    <name type="synonym">Felis silvestris catus</name>
    <dbReference type="NCBI Taxonomy" id="9685"/>
</organismHost>
<organismHost>
    <name type="scientific">Homo sapiens</name>
    <name type="common">Human</name>
    <dbReference type="NCBI Taxonomy" id="9606"/>
</organismHost>
<organismHost>
    <name type="scientific">Panthera pardus</name>
    <name type="common">Leopard</name>
    <name type="synonym">Felis pardus</name>
    <dbReference type="NCBI Taxonomy" id="9691"/>
</organismHost>
<organismHost>
    <name type="scientific">Panthera tigris</name>
    <name type="common">Tiger</name>
    <dbReference type="NCBI Taxonomy" id="9694"/>
</organismHost>
<organismHost>
    <name type="scientific">Sus scrofa</name>
    <name type="common">Pig</name>
    <dbReference type="NCBI Taxonomy" id="9823"/>
</organismHost>
<proteinExistence type="inferred from homology"/>
<comment type="function">
    <text evidence="1">Encapsidates the negative strand viral RNA, protecting it from nucleases. The encapsidated genomic RNA is termed the ribonucleoprotein (RNP) and serves as template for transcription and replication. The RNP needs to be localized in the host nucleus to start an infectious cycle, but is too large to diffuse through the nuclear pore complex. NP comprises at least 2 nuclear localization signals that are responsible for the active RNP import into the nucleus through cellular importin alpha/beta pathway. Later in the infection, nclear export of RNPs are mediated through viral proteins NEP interacting with M1 which binds nucleoproteins. It is possible that nucleoprotein binds directly host exportin-1/XPO1 and plays an active role in RNPs nuclear export. M1 interaction with RNP seems to hide nucleoprotein's nuclear localization signals. Soon after a virion infects a new cell, M1 dissociates from the RNP under acidification of the virion driven by M2 protein. Dissociation of M1 from RNP unmasks nucleoprotein's nuclear localization signals, targeting the RNP to the nucleus.</text>
</comment>
<comment type="subunit">
    <text evidence="1">Homomultimerizes to form the nucleocapsid. May bind host exportin-1/XPO1. Binds to viral genomic RNA. Protein-RNA contacts are mediated by a combination of electrostatic interactions between positively charged residues and the phosphate backbone and planar interactions between aromatic side chains and bases.</text>
</comment>
<comment type="subcellular location">
    <subcellularLocation>
        <location evidence="1">Virion</location>
    </subcellularLocation>
    <subcellularLocation>
        <location evidence="1">Host nucleus</location>
    </subcellularLocation>
</comment>
<comment type="PTM">
    <text evidence="1">Late in virus-infected cells, may be cleaved from a 56-kDa protein to a 53-kDa protein by a cellular caspase. This cleavage might be a marker for the onset of apoptosis in infected cells or have a specific function in virus host interaction.</text>
</comment>
<comment type="similarity">
    <text evidence="1">Belongs to the influenza viruses nucleoprotein family.</text>
</comment>